<proteinExistence type="evidence at protein level"/>
<protein>
    <recommendedName>
        <fullName evidence="8">Delta-stichotoxin-She1a</fullName>
        <shortName evidence="8">Delta-SHTX-She1a</shortName>
    </recommendedName>
    <alternativeName>
        <fullName evidence="7">Neurotoxin I</fullName>
    </alternativeName>
    <alternativeName>
        <fullName evidence="6 9 10">Neurotoxin Sh I</fullName>
        <shortName>ShI</shortName>
    </alternativeName>
    <alternativeName>
        <fullName>SHNA</fullName>
    </alternativeName>
    <alternativeName>
        <fullName>Sh1</fullName>
    </alternativeName>
    <alternativeName>
        <fullName>Toxin SHP-I</fullName>
    </alternativeName>
</protein>
<reference key="1">
    <citation type="journal article" date="1989" name="Biochemistry">
        <title>Isolation, characterization, and amino acid sequence of a polypeptide neurotoxin occurring in the sea anemone Stichodactyla helianthus.</title>
        <authorList>
            <person name="Kem W.R."/>
            <person name="Parten B."/>
            <person name="Pennington M.W."/>
            <person name="Price D.A."/>
            <person name="Dunn B.M."/>
        </authorList>
    </citation>
    <scope>PROTEIN SEQUENCE</scope>
    <scope>TOXIC DOSE</scope>
    <source>
        <tissue>Nematoblast</tissue>
    </source>
</reference>
<reference key="2">
    <citation type="journal article" date="1990" name="Int. J. Pept. Protein Res.">
        <title>Chemical synthesis of a neurotoxic polypeptide from the sea anemone Stichodactyla helianthus.</title>
        <authorList>
            <person name="Pennington M.W."/>
            <person name="Kem W.R."/>
            <person name="Norton R.S."/>
            <person name="Dunn B.M."/>
        </authorList>
    </citation>
    <scope>SYNTHESIS</scope>
</reference>
<reference key="3">
    <citation type="journal article" date="1994" name="Biochim. Biophys. Acta">
        <title>Limited proteolysis study of structure-function relationships in Sh I, a polypeptide neurotoxin from a sea anemone.</title>
        <authorList>
            <person name="Monks S.A."/>
            <person name="Gould A.R."/>
            <person name="Lumley P.E."/>
            <person name="Alewood P.F."/>
            <person name="Kem W.R."/>
            <person name="Goss N.H."/>
            <person name="Norton R.S."/>
        </authorList>
    </citation>
    <scope>STRUCTURE-FUNCTION RELATIONSHIP</scope>
</reference>
<reference key="4">
    <citation type="journal article" date="2012" name="Peptides">
        <title>Peptide fingerprinting of the neurotoxic fractions isolated from the secretions of sea anemones Stichodactyla helianthus and Bunodosoma granulifera. New members of the APETx-like family identified by a 454 pyrosequencing approach.</title>
        <authorList>
            <person name="Rodriguez A.A."/>
            <person name="Cassoli J.S."/>
            <person name="Sa F."/>
            <person name="Dong Z.Q."/>
            <person name="de Freitas J.C."/>
            <person name="Pimenta A.M."/>
            <person name="de Lima M.E."/>
            <person name="Konno K."/>
            <person name="Lee S.M."/>
            <person name="Garateix A."/>
            <person name="Zaharenko A.J."/>
        </authorList>
    </citation>
    <scope>MASS SPECTROMETRY</scope>
    <scope>FUNCTION</scope>
</reference>
<reference key="5">
    <citation type="journal article" date="2012" name="Toxicon">
        <title>Development of a rational nomenclature for naming peptide and protein toxins from sea anemones.</title>
        <authorList>
            <person name="Oliveira J.S."/>
            <person name="Fuentes-Silva D."/>
            <person name="King G.F."/>
        </authorList>
    </citation>
    <scope>NOMENCLATURE</scope>
</reference>
<reference key="6">
    <citation type="journal article" date="1990" name="J. Biol. Chem.">
        <title>Solution structure of neurotoxin I from the sea anemone Stichodactyla helianthus. A nuclear magnetic resonance, distance geometry, and restrained molecular dynamics study.</title>
        <authorList>
            <person name="Fogh R.H."/>
            <person name="Kem W.R."/>
            <person name="Norton R.S."/>
        </authorList>
    </citation>
    <scope>STRUCTURE BY NMR</scope>
    <scope>DISULFIDE BONDS</scope>
</reference>
<reference key="7">
    <citation type="journal article" date="1993" name="J. Biol. Chem.">
        <title>Refined structure in solution of the sea anemone neurotoxin ShI.</title>
        <authorList>
            <person name="Wilcox G.R."/>
            <person name="Fogh R.H."/>
            <person name="Norton R.S."/>
        </authorList>
    </citation>
    <scope>STRUCTURE BY NMR</scope>
    <scope>DISULFIDE BONDS</scope>
</reference>
<keyword id="KW-0002">3D-structure</keyword>
<keyword id="KW-0903">Direct protein sequencing</keyword>
<keyword id="KW-1015">Disulfide bond</keyword>
<keyword id="KW-0872">Ion channel impairing toxin</keyword>
<keyword id="KW-0166">Nematocyst</keyword>
<keyword id="KW-0528">Neurotoxin</keyword>
<keyword id="KW-0964">Secreted</keyword>
<keyword id="KW-0800">Toxin</keyword>
<keyword id="KW-0738">Voltage-gated sodium channel impairing toxin</keyword>
<feature type="chain" id="PRO_0000221529" description="Delta-stichotoxin-She1a" evidence="4">
    <location>
        <begin position="1"/>
        <end position="48"/>
    </location>
</feature>
<feature type="disulfide bond" evidence="2 5 12 13 14">
    <location>
        <begin position="3"/>
        <end position="43"/>
    </location>
</feature>
<feature type="disulfide bond" evidence="2 5 12 13 14">
    <location>
        <begin position="5"/>
        <end position="33"/>
    </location>
</feature>
<feature type="disulfide bond" evidence="2 5 12 13 14">
    <location>
        <begin position="26"/>
        <end position="44"/>
    </location>
</feature>
<feature type="strand" evidence="15">
    <location>
        <begin position="2"/>
        <end position="4"/>
    </location>
</feature>
<feature type="strand" evidence="16">
    <location>
        <begin position="9"/>
        <end position="11"/>
    </location>
</feature>
<feature type="strand" evidence="15">
    <location>
        <begin position="13"/>
        <end position="25"/>
    </location>
</feature>
<feature type="strand" evidence="15">
    <location>
        <begin position="30"/>
        <end position="38"/>
    </location>
</feature>
<feature type="strand" evidence="15">
    <location>
        <begin position="41"/>
        <end position="46"/>
    </location>
</feature>
<organism>
    <name type="scientific">Stichodactyla helianthus</name>
    <name type="common">Sun anemone</name>
    <name type="synonym">Stoichactis helianthus</name>
    <dbReference type="NCBI Taxonomy" id="6123"/>
    <lineage>
        <taxon>Eukaryota</taxon>
        <taxon>Metazoa</taxon>
        <taxon>Cnidaria</taxon>
        <taxon>Anthozoa</taxon>
        <taxon>Hexacorallia</taxon>
        <taxon>Actiniaria</taxon>
        <taxon>Stichodactylidae</taxon>
        <taxon>Stichodactyla</taxon>
    </lineage>
</organism>
<name>NA21_STIHL</name>
<comment type="function">
    <text evidence="1 3 4">Binds specifically to voltage-gated sodium channels (Nav), thereby delaying their inactivation during signal transduction (By similarity). Is highly toxic to crabs (by intrahemocoelic injection) (PubMed:2568126, PubMed:22015268), but without effect upon mice (by intraperitoneal injection) (PubMed:2568126).</text>
</comment>
<comment type="subcellular location">
    <subcellularLocation>
        <location>Secreted</location>
    </subcellularLocation>
    <subcellularLocation>
        <location>Nematocyst</location>
    </subcellularLocation>
</comment>
<comment type="mass spectrometry"/>
<comment type="toxic dose">
    <text evidence="4">LD(50) is 0.3 ug/kg by intrahemocoelic injection.</text>
</comment>
<comment type="similarity">
    <text evidence="11">Belongs to the sea anemone sodium channel inhibitory toxin family. Type II subfamily.</text>
</comment>
<dbReference type="PIR" id="A30114">
    <property type="entry name" value="A30114"/>
</dbReference>
<dbReference type="PDB" id="1SH1">
    <property type="method" value="NMR"/>
    <property type="chains" value="A=1-48"/>
</dbReference>
<dbReference type="PDB" id="1SHI">
    <property type="method" value="NMR"/>
    <property type="chains" value="A=1-48"/>
</dbReference>
<dbReference type="PDB" id="2SH1">
    <property type="method" value="NMR"/>
    <property type="chains" value="A=1-48"/>
</dbReference>
<dbReference type="PDBsum" id="1SH1"/>
<dbReference type="PDBsum" id="1SHI"/>
<dbReference type="PDBsum" id="2SH1"/>
<dbReference type="BMRB" id="P19651"/>
<dbReference type="SMR" id="P19651"/>
<dbReference type="TCDB" id="8.B.17.1.1">
    <property type="family name" value="the sea anemone peptide toxin class iii (shi) family"/>
</dbReference>
<dbReference type="EvolutionaryTrace" id="P19651"/>
<dbReference type="GO" id="GO:0005576">
    <property type="term" value="C:extracellular region"/>
    <property type="evidence" value="ECO:0007669"/>
    <property type="project" value="UniProtKB-SubCell"/>
</dbReference>
<dbReference type="GO" id="GO:0042151">
    <property type="term" value="C:nematocyst"/>
    <property type="evidence" value="ECO:0007669"/>
    <property type="project" value="UniProtKB-SubCell"/>
</dbReference>
<dbReference type="GO" id="GO:0017080">
    <property type="term" value="F:sodium channel regulator activity"/>
    <property type="evidence" value="ECO:0007669"/>
    <property type="project" value="UniProtKB-KW"/>
</dbReference>
<dbReference type="GO" id="GO:0090729">
    <property type="term" value="F:toxin activity"/>
    <property type="evidence" value="ECO:0007669"/>
    <property type="project" value="UniProtKB-KW"/>
</dbReference>
<dbReference type="GO" id="GO:0009966">
    <property type="term" value="P:regulation of signal transduction"/>
    <property type="evidence" value="ECO:0007669"/>
    <property type="project" value="InterPro"/>
</dbReference>
<dbReference type="Gene3D" id="2.20.20.10">
    <property type="entry name" value="Anthopleurin-A"/>
    <property type="match status" value="1"/>
</dbReference>
<dbReference type="InterPro" id="IPR000693">
    <property type="entry name" value="Anenome_toxin"/>
</dbReference>
<dbReference type="InterPro" id="IPR023355">
    <property type="entry name" value="Myo_ane_neurotoxin_sf"/>
</dbReference>
<dbReference type="Pfam" id="PF00706">
    <property type="entry name" value="Toxin_4"/>
    <property type="match status" value="1"/>
</dbReference>
<dbReference type="PIRSF" id="PIRSF001905">
    <property type="entry name" value="Anenome_toxin"/>
    <property type="match status" value="1"/>
</dbReference>
<dbReference type="SUPFAM" id="SSF57392">
    <property type="entry name" value="Defensin-like"/>
    <property type="match status" value="1"/>
</dbReference>
<accession>P19651</accession>
<sequence>AACKCDDEGPDIRTAPLTGTVDLGSCNAGWEKCASYYTIIADCCRKKK</sequence>
<evidence type="ECO:0000250" key="1"/>
<evidence type="ECO:0000269" key="2">
    <source>
    </source>
</evidence>
<evidence type="ECO:0000269" key="3">
    <source>
    </source>
</evidence>
<evidence type="ECO:0000269" key="4">
    <source>
    </source>
</evidence>
<evidence type="ECO:0000269" key="5">
    <source>
    </source>
</evidence>
<evidence type="ECO:0000303" key="6">
    <source>
    </source>
</evidence>
<evidence type="ECO:0000303" key="7">
    <source>
    </source>
</evidence>
<evidence type="ECO:0000303" key="8">
    <source>
    </source>
</evidence>
<evidence type="ECO:0000303" key="9">
    <source>
    </source>
</evidence>
<evidence type="ECO:0000303" key="10">
    <source>
    </source>
</evidence>
<evidence type="ECO:0000305" key="11"/>
<evidence type="ECO:0007744" key="12">
    <source>
        <dbReference type="PDB" id="1SH1"/>
    </source>
</evidence>
<evidence type="ECO:0007744" key="13">
    <source>
        <dbReference type="PDB" id="1SHI"/>
    </source>
</evidence>
<evidence type="ECO:0007744" key="14">
    <source>
        <dbReference type="PDB" id="2SH1"/>
    </source>
</evidence>
<evidence type="ECO:0007829" key="15">
    <source>
        <dbReference type="PDB" id="1SH1"/>
    </source>
</evidence>
<evidence type="ECO:0007829" key="16">
    <source>
        <dbReference type="PDB" id="2SH1"/>
    </source>
</evidence>